<keyword id="KW-0002">3D-structure</keyword>
<keyword id="KW-0270">Exopolysaccharide synthesis</keyword>
<keyword id="KW-1185">Reference proteome</keyword>
<keyword id="KW-0808">Transferase</keyword>
<protein>
    <recommendedName>
        <fullName>Exopolysaccharide phosphotransferase CpsY</fullName>
        <ecNumber>2.7.-.-</ecNumber>
    </recommendedName>
    <alternativeName>
        <fullName>Stealth protein CpsY</fullName>
    </alternativeName>
</protein>
<feature type="chain" id="PRO_0000235949" description="Exopolysaccharide phosphotransferase CpsY">
    <location>
        <begin position="1"/>
        <end position="532"/>
    </location>
</feature>
<organism>
    <name type="scientific">Mycobacterium tuberculosis (strain ATCC 25618 / H37Rv)</name>
    <dbReference type="NCBI Taxonomy" id="83332"/>
    <lineage>
        <taxon>Bacteria</taxon>
        <taxon>Bacillati</taxon>
        <taxon>Actinomycetota</taxon>
        <taxon>Actinomycetes</taxon>
        <taxon>Mycobacteriales</taxon>
        <taxon>Mycobacteriaceae</taxon>
        <taxon>Mycobacterium</taxon>
        <taxon>Mycobacterium tuberculosis complex</taxon>
    </lineage>
</organism>
<proteinExistence type="evidence at protein level"/>
<name>CPSY_MYCTU</name>
<dbReference type="EC" id="2.7.-.-"/>
<dbReference type="EMBL" id="AL123456">
    <property type="protein sequence ID" value="CCP43554.1"/>
    <property type="molecule type" value="Genomic_DNA"/>
</dbReference>
<dbReference type="PIR" id="G70536">
    <property type="entry name" value="G70536"/>
</dbReference>
<dbReference type="RefSeq" id="NP_215321.1">
    <property type="nucleotide sequence ID" value="NC_000962.3"/>
</dbReference>
<dbReference type="RefSeq" id="WP_003898594.1">
    <property type="nucleotide sequence ID" value="NZ_NVQJ01000064.1"/>
</dbReference>
<dbReference type="PDB" id="8J2N">
    <property type="method" value="X-ray"/>
    <property type="resolution" value="1.64 A"/>
    <property type="chains" value="A/B=201-520"/>
</dbReference>
<dbReference type="PDBsum" id="8J2N"/>
<dbReference type="SMR" id="P9WGD1"/>
<dbReference type="FunCoup" id="P9WGD1">
    <property type="interactions" value="38"/>
</dbReference>
<dbReference type="STRING" id="83332.Rv0806c"/>
<dbReference type="PaxDb" id="83332-Rv0806c"/>
<dbReference type="DNASU" id="885243"/>
<dbReference type="GeneID" id="885243"/>
<dbReference type="KEGG" id="mtu:Rv0806c"/>
<dbReference type="KEGG" id="mtv:RVBD_0806c"/>
<dbReference type="TubercuList" id="Rv0806c"/>
<dbReference type="eggNOG" id="COG0438">
    <property type="taxonomic scope" value="Bacteria"/>
</dbReference>
<dbReference type="InParanoid" id="P9WGD1"/>
<dbReference type="OrthoDB" id="9776077at2"/>
<dbReference type="PhylomeDB" id="P9WGD1"/>
<dbReference type="Proteomes" id="UP000001584">
    <property type="component" value="Chromosome"/>
</dbReference>
<dbReference type="GO" id="GO:0009274">
    <property type="term" value="C:peptidoglycan-based cell wall"/>
    <property type="evidence" value="ECO:0007005"/>
    <property type="project" value="MTBBASE"/>
</dbReference>
<dbReference type="GO" id="GO:0016772">
    <property type="term" value="F:transferase activity, transferring phosphorus-containing groups"/>
    <property type="evidence" value="ECO:0007669"/>
    <property type="project" value="InterPro"/>
</dbReference>
<dbReference type="GO" id="GO:0000271">
    <property type="term" value="P:polysaccharide biosynthetic process"/>
    <property type="evidence" value="ECO:0007669"/>
    <property type="project" value="UniProtKB-KW"/>
</dbReference>
<dbReference type="InterPro" id="IPR047141">
    <property type="entry name" value="Stealth"/>
</dbReference>
<dbReference type="InterPro" id="IPR031358">
    <property type="entry name" value="Stealth_CR1"/>
</dbReference>
<dbReference type="InterPro" id="IPR021520">
    <property type="entry name" value="Stealth_CR2"/>
</dbReference>
<dbReference type="InterPro" id="IPR031357">
    <property type="entry name" value="Stealth_CR3"/>
</dbReference>
<dbReference type="InterPro" id="IPR031356">
    <property type="entry name" value="Stealth_CR4"/>
</dbReference>
<dbReference type="PANTHER" id="PTHR24045">
    <property type="match status" value="1"/>
</dbReference>
<dbReference type="PANTHER" id="PTHR24045:SF0">
    <property type="entry name" value="N-ACETYLGLUCOSAMINE-1-PHOSPHOTRANSFERASE SUBUNITS ALPHA_BETA"/>
    <property type="match status" value="1"/>
</dbReference>
<dbReference type="Pfam" id="PF17101">
    <property type="entry name" value="Stealth_CR1"/>
    <property type="match status" value="1"/>
</dbReference>
<dbReference type="Pfam" id="PF11380">
    <property type="entry name" value="Stealth_CR2"/>
    <property type="match status" value="1"/>
</dbReference>
<dbReference type="Pfam" id="PF17102">
    <property type="entry name" value="Stealth_CR3"/>
    <property type="match status" value="1"/>
</dbReference>
<dbReference type="Pfam" id="PF17103">
    <property type="entry name" value="Stealth_CR4"/>
    <property type="match status" value="1"/>
</dbReference>
<evidence type="ECO:0000305" key="1"/>
<evidence type="ECO:0000305" key="2">
    <source>
    </source>
</evidence>
<reference key="1">
    <citation type="journal article" date="1998" name="Nature">
        <title>Deciphering the biology of Mycobacterium tuberculosis from the complete genome sequence.</title>
        <authorList>
            <person name="Cole S.T."/>
            <person name="Brosch R."/>
            <person name="Parkhill J."/>
            <person name="Garnier T."/>
            <person name="Churcher C.M."/>
            <person name="Harris D.E."/>
            <person name="Gordon S.V."/>
            <person name="Eiglmeier K."/>
            <person name="Gas S."/>
            <person name="Barry C.E. III"/>
            <person name="Tekaia F."/>
            <person name="Badcock K."/>
            <person name="Basham D."/>
            <person name="Brown D."/>
            <person name="Chillingworth T."/>
            <person name="Connor R."/>
            <person name="Davies R.M."/>
            <person name="Devlin K."/>
            <person name="Feltwell T."/>
            <person name="Gentles S."/>
            <person name="Hamlin N."/>
            <person name="Holroyd S."/>
            <person name="Hornsby T."/>
            <person name="Jagels K."/>
            <person name="Krogh A."/>
            <person name="McLean J."/>
            <person name="Moule S."/>
            <person name="Murphy L.D."/>
            <person name="Oliver S."/>
            <person name="Osborne J."/>
            <person name="Quail M.A."/>
            <person name="Rajandream M.A."/>
            <person name="Rogers J."/>
            <person name="Rutter S."/>
            <person name="Seeger K."/>
            <person name="Skelton S."/>
            <person name="Squares S."/>
            <person name="Squares R."/>
            <person name="Sulston J.E."/>
            <person name="Taylor K."/>
            <person name="Whitehead S."/>
            <person name="Barrell B.G."/>
        </authorList>
    </citation>
    <scope>NUCLEOTIDE SEQUENCE [LARGE SCALE GENOMIC DNA]</scope>
    <source>
        <strain>ATCC 25618 / H37Rv</strain>
    </source>
</reference>
<reference key="2">
    <citation type="journal article" date="2005" name="PLoS Comput. Biol.">
        <title>Stealth proteins: in silico identification of a novel protein family rendering bacterial pathogens invisible to host immune defense.</title>
        <authorList>
            <person name="Sperisen P."/>
            <person name="Schmid C.D."/>
            <person name="Bucher P."/>
            <person name="Zilian O."/>
        </authorList>
    </citation>
    <scope>IDENTIFICATION AS A STEALTH PROTEIN</scope>
    <scope>PREDICTION OF FUNCTION</scope>
</reference>
<reference key="3">
    <citation type="journal article" date="2011" name="Mol. Cell. Proteomics">
        <title>Proteogenomic analysis of Mycobacterium tuberculosis by high resolution mass spectrometry.</title>
        <authorList>
            <person name="Kelkar D.S."/>
            <person name="Kumar D."/>
            <person name="Kumar P."/>
            <person name="Balakrishnan L."/>
            <person name="Muthusamy B."/>
            <person name="Yadav A.K."/>
            <person name="Shrivastava P."/>
            <person name="Marimuthu A."/>
            <person name="Anand S."/>
            <person name="Sundaram H."/>
            <person name="Kingsbury R."/>
            <person name="Harsha H.C."/>
            <person name="Nair B."/>
            <person name="Prasad T.S."/>
            <person name="Chauhan D.S."/>
            <person name="Katoch K."/>
            <person name="Katoch V.M."/>
            <person name="Kumar P."/>
            <person name="Chaerkady R."/>
            <person name="Ramachandran S."/>
            <person name="Dash D."/>
            <person name="Pandey A."/>
        </authorList>
    </citation>
    <scope>IDENTIFICATION BY MASS SPECTROMETRY [LARGE SCALE ANALYSIS]</scope>
    <source>
        <strain>ATCC 25618 / H37Rv</strain>
    </source>
</reference>
<accession>P9WGD1</accession>
<accession>L0T6I2</accession>
<accession>O06628</accession>
<accession>Q7D992</accession>
<comment type="miscellaneous">
    <text evidence="2">Stealth proteins are part of a protein family that is conserved from bacteria to higher eukaryotes. Family members were first identified in microbes as proteins that help pathogens to elude the host innate immune system. Microbial stealth proteins are involved in the biosynthesis of exopolysaccharides. Stealth proteins are predicted to function as hexose-1-phosphoryltransferases (PubMed:16299590).</text>
</comment>
<comment type="similarity">
    <text evidence="1">Belongs to the stealth family.</text>
</comment>
<sequence length="532" mass="60268">MPKISSRDGGRPAQRTVNPIIVTRRGKIARLESGLTPQEAQIEDLVFLRKVLNRADIPYLLIRNHKNRPVLAINIELRAGLERALAAACATEPMYAKTIDEPGLSPVLVATDGLSQLVDPRVVRLYRRRIAPGGFRYGPAFGVELQFWVYEETVIRCPVENSLSRKVLPRNEITPTNVKLYGYKWPTLDGMFAPHASDVVFDIDMVFSWVDGSDPEFRARRMAQMSQYVVGEGDDAEARIRQIDELKYALRSVNMFAPWIRRIFIATDSTPPPWLAEHPKITIVRAEDHFSDRSALPTYNSHAVESQLHHIPGLSEHFLYSNDDMFFGRPLKASMFFSPGGVTRFIEAKTRIGLGANNPARSGFENAARVNRQLLFDRFGQVITRHLEHTAVPLRKSVLIEMEREFPEEFARTAASPFRSDTDISVTNSFYHYYALMTGRAVPQEKAKVLYVDTTSYAGLRLLPKLRKHRGYDFFCLNDGSFPEVPAAQRAERVVSFLERYFPIPAPWEKIAADVSRRDFAVPRTSAPSEGA</sequence>
<gene>
    <name type="primary">cpsY</name>
    <name type="ordered locus">Rv0806c</name>
</gene>